<protein>
    <recommendedName>
        <fullName>Mitochondrial dicarboxylate/tricarboxylate transporter DTC</fullName>
    </recommendedName>
    <alternativeName>
        <fullName>Dicarboxylate/tricarboxylate carrier</fullName>
    </alternativeName>
</protein>
<keyword id="KW-0472">Membrane</keyword>
<keyword id="KW-0496">Mitochondrion</keyword>
<keyword id="KW-0999">Mitochondrion inner membrane</keyword>
<keyword id="KW-1185">Reference proteome</keyword>
<keyword id="KW-0677">Repeat</keyword>
<keyword id="KW-0812">Transmembrane</keyword>
<keyword id="KW-1133">Transmembrane helix</keyword>
<keyword id="KW-0813">Transport</keyword>
<sequence length="298" mass="31912">MAEEKKAPISVWTTVKPFVNGGASGMLATCVIQPIDMIKVRIQLGQGSAASITTNMLKNEGVGAFYKGLSAGLLRQATYTTARLGSFKLLTAKAIESNDGKPLPLYQKALCGLTAGAIGACVGSPADLALIRMQADNTLPLAQRRNYTNAFHALTRISADEGVLALWKGCGPTVVRAMALNMGMLASYDQSAEYMRDNLGFGEMSTVVGASAVSGFCAAACSLPFDFVKTQIQKMQPDAQGKYPYTGSLDCAMKTLKEGGPLKFYSGFPVYCVRIAPHVMMTWIFLNQITKFQKKIGM</sequence>
<proteinExistence type="evidence at protein level"/>
<evidence type="ECO:0000255" key="1"/>
<evidence type="ECO:0000269" key="2">
    <source>
    </source>
</evidence>
<evidence type="ECO:0000305" key="3"/>
<evidence type="ECO:0000305" key="4">
    <source>
    </source>
</evidence>
<reference key="1">
    <citation type="journal article" date="2002" name="J. Biol. Chem.">
        <title>Identification of a novel transporter for dicarboxylates and tricarboxylates in plant mitochondria. Bacterial expression, reconstitution, functional characterization, and tissue distribution.</title>
        <authorList>
            <person name="Picault N."/>
            <person name="Palmieri L."/>
            <person name="Pisano I."/>
            <person name="Hodges M."/>
            <person name="Palmieri F."/>
        </authorList>
    </citation>
    <scope>NUCLEOTIDE SEQUENCE [MRNA]</scope>
    <scope>FUNCTION</scope>
    <scope>BIOPHYSICOCHEMICAL PROPERTIES</scope>
    <scope>TISSUE SPECIFICITY</scope>
</reference>
<reference key="2">
    <citation type="journal article" date="2000" name="Nature">
        <title>Sequence and analysis of chromosome 5 of the plant Arabidopsis thaliana.</title>
        <authorList>
            <person name="Tabata S."/>
            <person name="Kaneko T."/>
            <person name="Nakamura Y."/>
            <person name="Kotani H."/>
            <person name="Kato T."/>
            <person name="Asamizu E."/>
            <person name="Miyajima N."/>
            <person name="Sasamoto S."/>
            <person name="Kimura T."/>
            <person name="Hosouchi T."/>
            <person name="Kawashima K."/>
            <person name="Kohara M."/>
            <person name="Matsumoto M."/>
            <person name="Matsuno A."/>
            <person name="Muraki A."/>
            <person name="Nakayama S."/>
            <person name="Nakazaki N."/>
            <person name="Naruo K."/>
            <person name="Okumura S."/>
            <person name="Shinpo S."/>
            <person name="Takeuchi C."/>
            <person name="Wada T."/>
            <person name="Watanabe A."/>
            <person name="Yamada M."/>
            <person name="Yasuda M."/>
            <person name="Sato S."/>
            <person name="de la Bastide M."/>
            <person name="Huang E."/>
            <person name="Spiegel L."/>
            <person name="Gnoj L."/>
            <person name="O'Shaughnessy A."/>
            <person name="Preston R."/>
            <person name="Habermann K."/>
            <person name="Murray J."/>
            <person name="Johnson D."/>
            <person name="Rohlfing T."/>
            <person name="Nelson J."/>
            <person name="Stoneking T."/>
            <person name="Pepin K."/>
            <person name="Spieth J."/>
            <person name="Sekhon M."/>
            <person name="Armstrong J."/>
            <person name="Becker M."/>
            <person name="Belter E."/>
            <person name="Cordum H."/>
            <person name="Cordes M."/>
            <person name="Courtney L."/>
            <person name="Courtney W."/>
            <person name="Dante M."/>
            <person name="Du H."/>
            <person name="Edwards J."/>
            <person name="Fryman J."/>
            <person name="Haakensen B."/>
            <person name="Lamar E."/>
            <person name="Latreille P."/>
            <person name="Leonard S."/>
            <person name="Meyer R."/>
            <person name="Mulvaney E."/>
            <person name="Ozersky P."/>
            <person name="Riley A."/>
            <person name="Strowmatt C."/>
            <person name="Wagner-McPherson C."/>
            <person name="Wollam A."/>
            <person name="Yoakum M."/>
            <person name="Bell M."/>
            <person name="Dedhia N."/>
            <person name="Parnell L."/>
            <person name="Shah R."/>
            <person name="Rodriguez M."/>
            <person name="Hoon See L."/>
            <person name="Vil D."/>
            <person name="Baker J."/>
            <person name="Kirchoff K."/>
            <person name="Toth K."/>
            <person name="King L."/>
            <person name="Bahret A."/>
            <person name="Miller B."/>
            <person name="Marra M.A."/>
            <person name="Martienssen R."/>
            <person name="McCombie W.R."/>
            <person name="Wilson R.K."/>
            <person name="Murphy G."/>
            <person name="Bancroft I."/>
            <person name="Volckaert G."/>
            <person name="Wambutt R."/>
            <person name="Duesterhoeft A."/>
            <person name="Stiekema W."/>
            <person name="Pohl T."/>
            <person name="Entian K.-D."/>
            <person name="Terryn N."/>
            <person name="Hartley N."/>
            <person name="Bent E."/>
            <person name="Johnson S."/>
            <person name="Langham S.-A."/>
            <person name="McCullagh B."/>
            <person name="Robben J."/>
            <person name="Grymonprez B."/>
            <person name="Zimmermann W."/>
            <person name="Ramsperger U."/>
            <person name="Wedler H."/>
            <person name="Balke K."/>
            <person name="Wedler E."/>
            <person name="Peters S."/>
            <person name="van Staveren M."/>
            <person name="Dirkse W."/>
            <person name="Mooijman P."/>
            <person name="Klein Lankhorst R."/>
            <person name="Weitzenegger T."/>
            <person name="Bothe G."/>
            <person name="Rose M."/>
            <person name="Hauf J."/>
            <person name="Berneiser S."/>
            <person name="Hempel S."/>
            <person name="Feldpausch M."/>
            <person name="Lamberth S."/>
            <person name="Villarroel R."/>
            <person name="Gielen J."/>
            <person name="Ardiles W."/>
            <person name="Bents O."/>
            <person name="Lemcke K."/>
            <person name="Kolesov G."/>
            <person name="Mayer K.F.X."/>
            <person name="Rudd S."/>
            <person name="Schoof H."/>
            <person name="Schueller C."/>
            <person name="Zaccaria P."/>
            <person name="Mewes H.-W."/>
            <person name="Bevan M."/>
            <person name="Fransz P.F."/>
        </authorList>
    </citation>
    <scope>NUCLEOTIDE SEQUENCE [LARGE SCALE GENOMIC DNA]</scope>
    <source>
        <strain>cv. Columbia</strain>
    </source>
</reference>
<reference key="3">
    <citation type="journal article" date="2017" name="Plant J.">
        <title>Araport11: a complete reannotation of the Arabidopsis thaliana reference genome.</title>
        <authorList>
            <person name="Cheng C.Y."/>
            <person name="Krishnakumar V."/>
            <person name="Chan A.P."/>
            <person name="Thibaud-Nissen F."/>
            <person name="Schobel S."/>
            <person name="Town C.D."/>
        </authorList>
    </citation>
    <scope>GENOME REANNOTATION</scope>
    <source>
        <strain>cv. Columbia</strain>
    </source>
</reference>
<reference key="4">
    <citation type="journal article" date="2003" name="Science">
        <title>Empirical analysis of transcriptional activity in the Arabidopsis genome.</title>
        <authorList>
            <person name="Yamada K."/>
            <person name="Lim J."/>
            <person name="Dale J.M."/>
            <person name="Chen H."/>
            <person name="Shinn P."/>
            <person name="Palm C.J."/>
            <person name="Southwick A.M."/>
            <person name="Wu H.C."/>
            <person name="Kim C.J."/>
            <person name="Nguyen M."/>
            <person name="Pham P.K."/>
            <person name="Cheuk R.F."/>
            <person name="Karlin-Newmann G."/>
            <person name="Liu S.X."/>
            <person name="Lam B."/>
            <person name="Sakano H."/>
            <person name="Wu T."/>
            <person name="Yu G."/>
            <person name="Miranda M."/>
            <person name="Quach H.L."/>
            <person name="Tripp M."/>
            <person name="Chang C.H."/>
            <person name="Lee J.M."/>
            <person name="Toriumi M.J."/>
            <person name="Chan M.M."/>
            <person name="Tang C.C."/>
            <person name="Onodera C.S."/>
            <person name="Deng J.M."/>
            <person name="Akiyama K."/>
            <person name="Ansari Y."/>
            <person name="Arakawa T."/>
            <person name="Banh J."/>
            <person name="Banno F."/>
            <person name="Bowser L."/>
            <person name="Brooks S.Y."/>
            <person name="Carninci P."/>
            <person name="Chao Q."/>
            <person name="Choy N."/>
            <person name="Enju A."/>
            <person name="Goldsmith A.D."/>
            <person name="Gurjal M."/>
            <person name="Hansen N.F."/>
            <person name="Hayashizaki Y."/>
            <person name="Johnson-Hopson C."/>
            <person name="Hsuan V.W."/>
            <person name="Iida K."/>
            <person name="Karnes M."/>
            <person name="Khan S."/>
            <person name="Koesema E."/>
            <person name="Ishida J."/>
            <person name="Jiang P.X."/>
            <person name="Jones T."/>
            <person name="Kawai J."/>
            <person name="Kamiya A."/>
            <person name="Meyers C."/>
            <person name="Nakajima M."/>
            <person name="Narusaka M."/>
            <person name="Seki M."/>
            <person name="Sakurai T."/>
            <person name="Satou M."/>
            <person name="Tamse R."/>
            <person name="Vaysberg M."/>
            <person name="Wallender E.K."/>
            <person name="Wong C."/>
            <person name="Yamamura Y."/>
            <person name="Yuan S."/>
            <person name="Shinozaki K."/>
            <person name="Davis R.W."/>
            <person name="Theologis A."/>
            <person name="Ecker J.R."/>
        </authorList>
    </citation>
    <scope>NUCLEOTIDE SEQUENCE [LARGE SCALE MRNA]</scope>
    <source>
        <strain>cv. Columbia</strain>
    </source>
</reference>
<reference key="5">
    <citation type="submission" date="2006-07" db="EMBL/GenBank/DDBJ databases">
        <title>Large-scale analysis of RIKEN Arabidopsis full-length (RAFL) cDNAs.</title>
        <authorList>
            <person name="Totoki Y."/>
            <person name="Seki M."/>
            <person name="Ishida J."/>
            <person name="Nakajima M."/>
            <person name="Enju A."/>
            <person name="Kamiya A."/>
            <person name="Narusaka M."/>
            <person name="Shin-i T."/>
            <person name="Nakagawa M."/>
            <person name="Sakamoto N."/>
            <person name="Oishi K."/>
            <person name="Kohara Y."/>
            <person name="Kobayashi M."/>
            <person name="Toyoda A."/>
            <person name="Sakaki Y."/>
            <person name="Sakurai T."/>
            <person name="Iida K."/>
            <person name="Akiyama K."/>
            <person name="Satou M."/>
            <person name="Toyoda T."/>
            <person name="Konagaya A."/>
            <person name="Carninci P."/>
            <person name="Kawai J."/>
            <person name="Hayashizaki Y."/>
            <person name="Shinozaki K."/>
        </authorList>
    </citation>
    <scope>NUCLEOTIDE SEQUENCE [LARGE SCALE MRNA]</scope>
    <source>
        <strain>cv. Columbia</strain>
    </source>
</reference>
<reference key="6">
    <citation type="journal article" date="2003" name="Plant Physiol.">
        <title>Genomic and proteomic analysis of mitochondrial carrier proteins in Arabidopsis.</title>
        <authorList>
            <person name="Millar A.H."/>
            <person name="Heazlewood J.L."/>
        </authorList>
    </citation>
    <scope>SUBCELLULAR LOCATION</scope>
    <scope>IDENTIFICATION BY MASS SPECTROMETRY</scope>
</reference>
<reference key="7">
    <citation type="journal article" date="2007" name="Mol. Cell. Proteomics">
        <title>Multidimensional protein identification technology (MudPIT) analysis of ubiquitinated proteins in plants.</title>
        <authorList>
            <person name="Maor R."/>
            <person name="Jones A."/>
            <person name="Nuehse T.S."/>
            <person name="Studholme D.J."/>
            <person name="Peck S.C."/>
            <person name="Shirasu K."/>
        </authorList>
    </citation>
    <scope>IDENTIFICATION BY MASS SPECTROMETRY [LARGE SCALE ANALYSIS]</scope>
    <source>
        <strain>cv. Landsberg erecta</strain>
    </source>
</reference>
<feature type="chain" id="PRO_0000420761" description="Mitochondrial dicarboxylate/tricarboxylate transporter DTC">
    <location>
        <begin position="1"/>
        <end position="298"/>
    </location>
</feature>
<feature type="transmembrane region" description="Helical; Name=1" evidence="1">
    <location>
        <begin position="18"/>
        <end position="38"/>
    </location>
</feature>
<feature type="transmembrane region" description="Helical; Name=2" evidence="1">
    <location>
        <begin position="68"/>
        <end position="88"/>
    </location>
</feature>
<feature type="transmembrane region" description="Helical; Name=3" evidence="1">
    <location>
        <begin position="109"/>
        <end position="129"/>
    </location>
</feature>
<feature type="transmembrane region" description="Helical; Name=4" evidence="1">
    <location>
        <begin position="169"/>
        <end position="189"/>
    </location>
</feature>
<feature type="transmembrane region" description="Helical; Name=5" evidence="1">
    <location>
        <begin position="208"/>
        <end position="228"/>
    </location>
</feature>
<feature type="transmembrane region" description="Helical; Name=6" evidence="1">
    <location>
        <begin position="268"/>
        <end position="288"/>
    </location>
</feature>
<feature type="repeat" description="Solcar 1">
    <location>
        <begin position="12"/>
        <end position="93"/>
    </location>
</feature>
<feature type="repeat" description="Solcar 2">
    <location>
        <begin position="103"/>
        <end position="194"/>
    </location>
</feature>
<feature type="repeat" description="Solcar 3">
    <location>
        <begin position="202"/>
        <end position="292"/>
    </location>
</feature>
<name>DTC_ARATH</name>
<dbReference type="EMBL" id="AJ311780">
    <property type="protein sequence ID" value="CAC84549.1"/>
    <property type="molecule type" value="mRNA"/>
</dbReference>
<dbReference type="EMBL" id="AF296838">
    <property type="status" value="NOT_ANNOTATED_CDS"/>
    <property type="molecule type" value="Genomic_DNA"/>
</dbReference>
<dbReference type="EMBL" id="CP002688">
    <property type="protein sequence ID" value="AED92746.1"/>
    <property type="molecule type" value="Genomic_DNA"/>
</dbReference>
<dbReference type="EMBL" id="AF360153">
    <property type="protein sequence ID" value="AAK25863.1"/>
    <property type="molecule type" value="mRNA"/>
</dbReference>
<dbReference type="EMBL" id="AY056307">
    <property type="protein sequence ID" value="AAL07156.1"/>
    <property type="molecule type" value="mRNA"/>
</dbReference>
<dbReference type="EMBL" id="AY085901">
    <property type="protein sequence ID" value="AAM63113.1"/>
    <property type="molecule type" value="mRNA"/>
</dbReference>
<dbReference type="EMBL" id="AK226470">
    <property type="protein sequence ID" value="BAE98612.1"/>
    <property type="molecule type" value="mRNA"/>
</dbReference>
<dbReference type="RefSeq" id="NP_197477.1">
    <property type="nucleotide sequence ID" value="NM_121981.5"/>
</dbReference>
<dbReference type="SMR" id="Q9C5M0"/>
<dbReference type="BioGRID" id="17372">
    <property type="interactions" value="21"/>
</dbReference>
<dbReference type="FunCoup" id="Q9C5M0">
    <property type="interactions" value="2121"/>
</dbReference>
<dbReference type="IntAct" id="Q9C5M0">
    <property type="interactions" value="2"/>
</dbReference>
<dbReference type="MINT" id="Q9C5M0"/>
<dbReference type="STRING" id="3702.Q9C5M0"/>
<dbReference type="TCDB" id="2.A.29.2.16">
    <property type="family name" value="the mitochondrial carrier (mc) family"/>
</dbReference>
<dbReference type="GlyGen" id="Q9C5M0">
    <property type="glycosylation" value="1 site"/>
</dbReference>
<dbReference type="iPTMnet" id="Q9C5M0"/>
<dbReference type="PaxDb" id="3702-AT5G19760.1"/>
<dbReference type="ProteomicsDB" id="222760"/>
<dbReference type="DNASU" id="832096"/>
<dbReference type="EnsemblPlants" id="AT5G19760.1">
    <property type="protein sequence ID" value="AT5G19760.1"/>
    <property type="gene ID" value="AT5G19760"/>
</dbReference>
<dbReference type="GeneID" id="832096"/>
<dbReference type="Gramene" id="AT5G19760.1">
    <property type="protein sequence ID" value="AT5G19760.1"/>
    <property type="gene ID" value="AT5G19760"/>
</dbReference>
<dbReference type="KEGG" id="ath:AT5G19760"/>
<dbReference type="Araport" id="AT5G19760"/>
<dbReference type="TAIR" id="AT5G19760"/>
<dbReference type="eggNOG" id="KOG0759">
    <property type="taxonomic scope" value="Eukaryota"/>
</dbReference>
<dbReference type="HOGENOM" id="CLU_015166_14_1_1"/>
<dbReference type="InParanoid" id="Q9C5M0"/>
<dbReference type="OMA" id="TLWRGAI"/>
<dbReference type="OrthoDB" id="1029559at2759"/>
<dbReference type="PhylomeDB" id="Q9C5M0"/>
<dbReference type="CD-CODE" id="4299E36E">
    <property type="entry name" value="Nucleolus"/>
</dbReference>
<dbReference type="PRO" id="PR:Q9C5M0"/>
<dbReference type="Proteomes" id="UP000006548">
    <property type="component" value="Chromosome 5"/>
</dbReference>
<dbReference type="ExpressionAtlas" id="Q9C5M0">
    <property type="expression patterns" value="baseline and differential"/>
</dbReference>
<dbReference type="GO" id="GO:0009941">
    <property type="term" value="C:chloroplast envelope"/>
    <property type="evidence" value="ECO:0007005"/>
    <property type="project" value="TAIR"/>
</dbReference>
<dbReference type="GO" id="GO:0005743">
    <property type="term" value="C:mitochondrial inner membrane"/>
    <property type="evidence" value="ECO:0007669"/>
    <property type="project" value="UniProtKB-SubCell"/>
</dbReference>
<dbReference type="GO" id="GO:0005739">
    <property type="term" value="C:mitochondrion"/>
    <property type="evidence" value="ECO:0007005"/>
    <property type="project" value="TAIR"/>
</dbReference>
<dbReference type="GO" id="GO:0009505">
    <property type="term" value="C:plant-type cell wall"/>
    <property type="evidence" value="ECO:0007005"/>
    <property type="project" value="TAIR"/>
</dbReference>
<dbReference type="GO" id="GO:0000325">
    <property type="term" value="C:plant-type vacuole"/>
    <property type="evidence" value="ECO:0007005"/>
    <property type="project" value="TAIR"/>
</dbReference>
<dbReference type="GO" id="GO:0009506">
    <property type="term" value="C:plasmodesma"/>
    <property type="evidence" value="ECO:0007005"/>
    <property type="project" value="TAIR"/>
</dbReference>
<dbReference type="GO" id="GO:0009536">
    <property type="term" value="C:plastid"/>
    <property type="evidence" value="ECO:0007005"/>
    <property type="project" value="TAIR"/>
</dbReference>
<dbReference type="GO" id="GO:0005310">
    <property type="term" value="F:dicarboxylic acid transmembrane transporter activity"/>
    <property type="evidence" value="ECO:0000314"/>
    <property type="project" value="TAIR"/>
</dbReference>
<dbReference type="GO" id="GO:0015142">
    <property type="term" value="F:tricarboxylic acid transmembrane transporter activity"/>
    <property type="evidence" value="ECO:0000314"/>
    <property type="project" value="TAIR"/>
</dbReference>
<dbReference type="GO" id="GO:0006835">
    <property type="term" value="P:dicarboxylic acid transport"/>
    <property type="evidence" value="ECO:0000314"/>
    <property type="project" value="TAIR"/>
</dbReference>
<dbReference type="GO" id="GO:0035674">
    <property type="term" value="P:tricarboxylic acid transmembrane transport"/>
    <property type="evidence" value="ECO:0000314"/>
    <property type="project" value="TAIR"/>
</dbReference>
<dbReference type="FunFam" id="1.50.40.10:FF:000009">
    <property type="entry name" value="Mitochondrial 2-oxoglutarate/malate carrier protein"/>
    <property type="match status" value="1"/>
</dbReference>
<dbReference type="Gene3D" id="1.50.40.10">
    <property type="entry name" value="Mitochondrial carrier domain"/>
    <property type="match status" value="1"/>
</dbReference>
<dbReference type="InterPro" id="IPR002067">
    <property type="entry name" value="Mit_carrier"/>
</dbReference>
<dbReference type="InterPro" id="IPR050391">
    <property type="entry name" value="Mito_Metabolite_Transporter"/>
</dbReference>
<dbReference type="InterPro" id="IPR018108">
    <property type="entry name" value="Mitochondrial_sb/sol_carrier"/>
</dbReference>
<dbReference type="InterPro" id="IPR023395">
    <property type="entry name" value="Mt_carrier_dom_sf"/>
</dbReference>
<dbReference type="PANTHER" id="PTHR45618">
    <property type="entry name" value="MITOCHONDRIAL DICARBOXYLATE CARRIER-RELATED"/>
    <property type="match status" value="1"/>
</dbReference>
<dbReference type="Pfam" id="PF00153">
    <property type="entry name" value="Mito_carr"/>
    <property type="match status" value="3"/>
</dbReference>
<dbReference type="PRINTS" id="PR00926">
    <property type="entry name" value="MITOCARRIER"/>
</dbReference>
<dbReference type="SUPFAM" id="SSF103506">
    <property type="entry name" value="Mitochondrial carrier"/>
    <property type="match status" value="1"/>
</dbReference>
<dbReference type="PROSITE" id="PS50920">
    <property type="entry name" value="SOLCAR"/>
    <property type="match status" value="3"/>
</dbReference>
<accession>Q9C5M0</accession>
<accession>Q8SFL2</accession>
<organism>
    <name type="scientific">Arabidopsis thaliana</name>
    <name type="common">Mouse-ear cress</name>
    <dbReference type="NCBI Taxonomy" id="3702"/>
    <lineage>
        <taxon>Eukaryota</taxon>
        <taxon>Viridiplantae</taxon>
        <taxon>Streptophyta</taxon>
        <taxon>Embryophyta</taxon>
        <taxon>Tracheophyta</taxon>
        <taxon>Spermatophyta</taxon>
        <taxon>Magnoliopsida</taxon>
        <taxon>eudicotyledons</taxon>
        <taxon>Gunneridae</taxon>
        <taxon>Pentapetalae</taxon>
        <taxon>rosids</taxon>
        <taxon>malvids</taxon>
        <taxon>Brassicales</taxon>
        <taxon>Brassicaceae</taxon>
        <taxon>Camelineae</taxon>
        <taxon>Arabidopsis</taxon>
    </lineage>
</organism>
<gene>
    <name type="primary">DTC</name>
    <name type="ordered locus">At5g19760</name>
    <name type="ORF">T29J13.180</name>
</gene>
<comment type="function">
    <text evidence="2">Catalyzes the transport of dicarboxylates, such as oxoglutarate, oxaloacetate, malate, and succinate, and of tricarboxylates, such as citrate, isocitrate, cis-aconitate, and trans-aconitate by a counter-exchange mechanism across the inner mitochondrial membrane. Substrate preference in reconstituted proteoliposomes is oxaloacetate &gt; malonate &gt; malate &gt; maleate &gt; succinate &gt; oxoglutarate &gt; citrate &gt; trans-aconitate &gt; cis-aconitate &gt; sulfate &gt; isocitrate. May be important for plant metabolic functions requiring organic acid flux to or from the mitochondria, such as nitrogen assimilation, export of reducing equivalents from the mitochondria, and fatty acid elongation.</text>
</comment>
<comment type="biophysicochemical properties">
    <kinetics>
        <KM evidence="2">0.14 mM for oxoglutarate (for the recombinant protein in reconstituted proteoliposomes at pH 6.0)</KM>
        <KM evidence="2">0.36 mM for malate (for the recombinant protein in reconstituted proteoliposomes at pH 6.0)</KM>
        <KM evidence="2">0.15 mM for citrate (for the recombinant protein in reconstituted proteoliposomes at pH 6.0)</KM>
        <Vmax evidence="2">2.9 mmol/min/g enzyme toward oxoglutarate (for the recombinant protein in reconstituted proteoliposomes at pH 6.0)</Vmax>
        <Vmax evidence="2">4.2 mmol/min/g enzyme toward malate (for the recombinant protein in reconstituted proteoliposomes at pH 6.0)</Vmax>
        <Vmax evidence="2">1.7 mmol/min/g enzyme toward citrate (for the recombinant protein in reconstituted proteoliposomes at pH 6.0)</Vmax>
    </kinetics>
    <phDependence>
        <text evidence="2">Optimum pH is 5.5-6.0.</text>
    </phDependence>
</comment>
<comment type="subcellular location">
    <subcellularLocation>
        <location evidence="4">Mitochondrion inner membrane</location>
        <topology evidence="4">Multi-pass membrane protein</topology>
    </subcellularLocation>
</comment>
<comment type="tissue specificity">
    <text evidence="2">Highly expressed in flower buds and at lower levels in roots, leaves and stems.</text>
</comment>
<comment type="similarity">
    <text evidence="3">Belongs to the mitochondrial carrier (TC 2.A.29) family.</text>
</comment>